<keyword id="KW-0131">Cell cycle</keyword>
<keyword id="KW-0132">Cell division</keyword>
<keyword id="KW-0997">Cell inner membrane</keyword>
<keyword id="KW-1003">Cell membrane</keyword>
<keyword id="KW-0133">Cell shape</keyword>
<keyword id="KW-0961">Cell wall biogenesis/degradation</keyword>
<keyword id="KW-0328">Glycosyltransferase</keyword>
<keyword id="KW-0472">Membrane</keyword>
<keyword id="KW-0573">Peptidoglycan synthesis</keyword>
<keyword id="KW-0808">Transferase</keyword>
<reference key="1">
    <citation type="journal article" date="2006" name="PLoS Genet.">
        <title>The complete genome sequence and comparative genome analysis of the high pathogenicity Yersinia enterocolitica strain 8081.</title>
        <authorList>
            <person name="Thomson N.R."/>
            <person name="Howard S."/>
            <person name="Wren B.W."/>
            <person name="Holden M.T.G."/>
            <person name="Crossman L."/>
            <person name="Challis G.L."/>
            <person name="Churcher C."/>
            <person name="Mungall K."/>
            <person name="Brooks K."/>
            <person name="Chillingworth T."/>
            <person name="Feltwell T."/>
            <person name="Abdellah Z."/>
            <person name="Hauser H."/>
            <person name="Jagels K."/>
            <person name="Maddison M."/>
            <person name="Moule S."/>
            <person name="Sanders M."/>
            <person name="Whitehead S."/>
            <person name="Quail M.A."/>
            <person name="Dougan G."/>
            <person name="Parkhill J."/>
            <person name="Prentice M.B."/>
        </authorList>
    </citation>
    <scope>NUCLEOTIDE SEQUENCE [LARGE SCALE GENOMIC DNA]</scope>
    <source>
        <strain>NCTC 13174 / 8081</strain>
    </source>
</reference>
<sequence>MSGKTKRLMVMAGGTGGHVFPGLAVAHHLMAQGWQVRWLGTADRMEASLVPKNGIEIDFIEISGLRGKGLMAQLTAPVRIYRAVRQAKKIMRDYQPDVVLGMGGYVSGPGGLAAWLCGIPVVLHEQNGIAGLTNRWLARIAKKVLQAFPGAFPNADVVGNPVRTDVLALPLPAQRLVGREGPIRVLVIGGSQGARVLNQTMPQVAATLGEQITIWHQVGKGALPDVLQAYQQAGQGDKHQVVEFIDDMAAAYAWADVVVCRSGALTVSEVAAAGLPAIFVPFQHKDRQQYWNALPLEKAGAAKIIEQPQFTAQAVSNLLAEWDRPTLLAMAEQARLVAIPDATERVAAEVAAASK</sequence>
<organism>
    <name type="scientific">Yersinia enterocolitica serotype O:8 / biotype 1B (strain NCTC 13174 / 8081)</name>
    <dbReference type="NCBI Taxonomy" id="393305"/>
    <lineage>
        <taxon>Bacteria</taxon>
        <taxon>Pseudomonadati</taxon>
        <taxon>Pseudomonadota</taxon>
        <taxon>Gammaproteobacteria</taxon>
        <taxon>Enterobacterales</taxon>
        <taxon>Yersiniaceae</taxon>
        <taxon>Yersinia</taxon>
    </lineage>
</organism>
<name>MURG_YERE8</name>
<evidence type="ECO:0000255" key="1">
    <source>
        <dbReference type="HAMAP-Rule" id="MF_00033"/>
    </source>
</evidence>
<comment type="function">
    <text evidence="1">Cell wall formation. Catalyzes the transfer of a GlcNAc subunit on undecaprenyl-pyrophosphoryl-MurNAc-pentapeptide (lipid intermediate I) to form undecaprenyl-pyrophosphoryl-MurNAc-(pentapeptide)GlcNAc (lipid intermediate II).</text>
</comment>
<comment type="catalytic activity">
    <reaction evidence="1">
        <text>di-trans,octa-cis-undecaprenyl diphospho-N-acetyl-alpha-D-muramoyl-L-alanyl-D-glutamyl-meso-2,6-diaminopimeloyl-D-alanyl-D-alanine + UDP-N-acetyl-alpha-D-glucosamine = di-trans,octa-cis-undecaprenyl diphospho-[N-acetyl-alpha-D-glucosaminyl-(1-&gt;4)]-N-acetyl-alpha-D-muramoyl-L-alanyl-D-glutamyl-meso-2,6-diaminopimeloyl-D-alanyl-D-alanine + UDP + H(+)</text>
        <dbReference type="Rhea" id="RHEA:31227"/>
        <dbReference type="ChEBI" id="CHEBI:15378"/>
        <dbReference type="ChEBI" id="CHEBI:57705"/>
        <dbReference type="ChEBI" id="CHEBI:58223"/>
        <dbReference type="ChEBI" id="CHEBI:61387"/>
        <dbReference type="ChEBI" id="CHEBI:61388"/>
        <dbReference type="EC" id="2.4.1.227"/>
    </reaction>
</comment>
<comment type="pathway">
    <text evidence="1">Cell wall biogenesis; peptidoglycan biosynthesis.</text>
</comment>
<comment type="subcellular location">
    <subcellularLocation>
        <location evidence="1">Cell inner membrane</location>
        <topology evidence="1">Peripheral membrane protein</topology>
        <orientation evidence="1">Cytoplasmic side</orientation>
    </subcellularLocation>
</comment>
<comment type="similarity">
    <text evidence="1">Belongs to the glycosyltransferase 28 family. MurG subfamily.</text>
</comment>
<accession>A1JJJ3</accession>
<protein>
    <recommendedName>
        <fullName evidence="1">UDP-N-acetylglucosamine--N-acetylmuramyl-(pentapeptide) pyrophosphoryl-undecaprenol N-acetylglucosamine transferase</fullName>
        <ecNumber evidence="1">2.4.1.227</ecNumber>
    </recommendedName>
    <alternativeName>
        <fullName evidence="1">Undecaprenyl-PP-MurNAc-pentapeptide-UDPGlcNAc GlcNAc transferase</fullName>
    </alternativeName>
</protein>
<dbReference type="EC" id="2.4.1.227" evidence="1"/>
<dbReference type="EMBL" id="AM286415">
    <property type="protein sequence ID" value="CAL10781.1"/>
    <property type="molecule type" value="Genomic_DNA"/>
</dbReference>
<dbReference type="RefSeq" id="WP_011815568.1">
    <property type="nucleotide sequence ID" value="NC_008800.1"/>
</dbReference>
<dbReference type="RefSeq" id="YP_001005021.1">
    <property type="nucleotide sequence ID" value="NC_008800.1"/>
</dbReference>
<dbReference type="SMR" id="A1JJJ3"/>
<dbReference type="CAZy" id="GT28">
    <property type="family name" value="Glycosyltransferase Family 28"/>
</dbReference>
<dbReference type="KEGG" id="yen:YE0672"/>
<dbReference type="PATRIC" id="fig|393305.7.peg.767"/>
<dbReference type="eggNOG" id="COG0707">
    <property type="taxonomic scope" value="Bacteria"/>
</dbReference>
<dbReference type="HOGENOM" id="CLU_037404_2_0_6"/>
<dbReference type="OrthoDB" id="9808936at2"/>
<dbReference type="UniPathway" id="UPA00219"/>
<dbReference type="Proteomes" id="UP000000642">
    <property type="component" value="Chromosome"/>
</dbReference>
<dbReference type="GO" id="GO:0005886">
    <property type="term" value="C:plasma membrane"/>
    <property type="evidence" value="ECO:0007669"/>
    <property type="project" value="UniProtKB-SubCell"/>
</dbReference>
<dbReference type="GO" id="GO:0051991">
    <property type="term" value="F:UDP-N-acetyl-D-glucosamine:N-acetylmuramoyl-L-alanyl-D-glutamyl-meso-2,6-diaminopimelyl-D-alanyl-D-alanine-diphosphoundecaprenol 4-beta-N-acetylglucosaminlytransferase activity"/>
    <property type="evidence" value="ECO:0007669"/>
    <property type="project" value="RHEA"/>
</dbReference>
<dbReference type="GO" id="GO:0050511">
    <property type="term" value="F:undecaprenyldiphospho-muramoylpentapeptide beta-N-acetylglucosaminyltransferase activity"/>
    <property type="evidence" value="ECO:0007669"/>
    <property type="project" value="UniProtKB-UniRule"/>
</dbReference>
<dbReference type="GO" id="GO:0005975">
    <property type="term" value="P:carbohydrate metabolic process"/>
    <property type="evidence" value="ECO:0007669"/>
    <property type="project" value="InterPro"/>
</dbReference>
<dbReference type="GO" id="GO:0051301">
    <property type="term" value="P:cell division"/>
    <property type="evidence" value="ECO:0007669"/>
    <property type="project" value="UniProtKB-KW"/>
</dbReference>
<dbReference type="GO" id="GO:0071555">
    <property type="term" value="P:cell wall organization"/>
    <property type="evidence" value="ECO:0007669"/>
    <property type="project" value="UniProtKB-KW"/>
</dbReference>
<dbReference type="GO" id="GO:0030259">
    <property type="term" value="P:lipid glycosylation"/>
    <property type="evidence" value="ECO:0007669"/>
    <property type="project" value="UniProtKB-UniRule"/>
</dbReference>
<dbReference type="GO" id="GO:0009252">
    <property type="term" value="P:peptidoglycan biosynthetic process"/>
    <property type="evidence" value="ECO:0007669"/>
    <property type="project" value="UniProtKB-UniRule"/>
</dbReference>
<dbReference type="GO" id="GO:0008360">
    <property type="term" value="P:regulation of cell shape"/>
    <property type="evidence" value="ECO:0007669"/>
    <property type="project" value="UniProtKB-KW"/>
</dbReference>
<dbReference type="CDD" id="cd03785">
    <property type="entry name" value="GT28_MurG"/>
    <property type="match status" value="1"/>
</dbReference>
<dbReference type="FunFam" id="3.40.50.2000:FF:000016">
    <property type="entry name" value="UDP-N-acetylglucosamine--N-acetylmuramyl-(pentapeptide) pyrophosphoryl-undecaprenol N-acetylglucosamine transferase"/>
    <property type="match status" value="1"/>
</dbReference>
<dbReference type="FunFam" id="3.40.50.2000:FF:000018">
    <property type="entry name" value="UDP-N-acetylglucosamine--N-acetylmuramyl-(pentapeptide) pyrophosphoryl-undecaprenol N-acetylglucosamine transferase"/>
    <property type="match status" value="1"/>
</dbReference>
<dbReference type="Gene3D" id="3.40.50.2000">
    <property type="entry name" value="Glycogen Phosphorylase B"/>
    <property type="match status" value="2"/>
</dbReference>
<dbReference type="HAMAP" id="MF_00033">
    <property type="entry name" value="MurG"/>
    <property type="match status" value="1"/>
</dbReference>
<dbReference type="InterPro" id="IPR006009">
    <property type="entry name" value="GlcNAc_MurG"/>
</dbReference>
<dbReference type="InterPro" id="IPR007235">
    <property type="entry name" value="Glyco_trans_28_C"/>
</dbReference>
<dbReference type="InterPro" id="IPR004276">
    <property type="entry name" value="GlycoTrans_28_N"/>
</dbReference>
<dbReference type="NCBIfam" id="TIGR01133">
    <property type="entry name" value="murG"/>
    <property type="match status" value="1"/>
</dbReference>
<dbReference type="PANTHER" id="PTHR21015:SF22">
    <property type="entry name" value="GLYCOSYLTRANSFERASE"/>
    <property type="match status" value="1"/>
</dbReference>
<dbReference type="PANTHER" id="PTHR21015">
    <property type="entry name" value="UDP-N-ACETYLGLUCOSAMINE--N-ACETYLMURAMYL-(PENTAPEPTIDE) PYROPHOSPHORYL-UNDECAPRENOL N-ACETYLGLUCOSAMINE TRANSFERASE 1"/>
    <property type="match status" value="1"/>
</dbReference>
<dbReference type="Pfam" id="PF04101">
    <property type="entry name" value="Glyco_tran_28_C"/>
    <property type="match status" value="1"/>
</dbReference>
<dbReference type="Pfam" id="PF03033">
    <property type="entry name" value="Glyco_transf_28"/>
    <property type="match status" value="1"/>
</dbReference>
<dbReference type="SUPFAM" id="SSF53756">
    <property type="entry name" value="UDP-Glycosyltransferase/glycogen phosphorylase"/>
    <property type="match status" value="1"/>
</dbReference>
<feature type="chain" id="PRO_1000002703" description="UDP-N-acetylglucosamine--N-acetylmuramyl-(pentapeptide) pyrophosphoryl-undecaprenol N-acetylglucosamine transferase">
    <location>
        <begin position="1"/>
        <end position="355"/>
    </location>
</feature>
<feature type="binding site" evidence="1">
    <location>
        <begin position="15"/>
        <end position="17"/>
    </location>
    <ligand>
        <name>UDP-N-acetyl-alpha-D-glucosamine</name>
        <dbReference type="ChEBI" id="CHEBI:57705"/>
    </ligand>
</feature>
<feature type="binding site" evidence="1">
    <location>
        <position position="127"/>
    </location>
    <ligand>
        <name>UDP-N-acetyl-alpha-D-glucosamine</name>
        <dbReference type="ChEBI" id="CHEBI:57705"/>
    </ligand>
</feature>
<feature type="binding site" evidence="1">
    <location>
        <position position="163"/>
    </location>
    <ligand>
        <name>UDP-N-acetyl-alpha-D-glucosamine</name>
        <dbReference type="ChEBI" id="CHEBI:57705"/>
    </ligand>
</feature>
<feature type="binding site" evidence="1">
    <location>
        <position position="191"/>
    </location>
    <ligand>
        <name>UDP-N-acetyl-alpha-D-glucosamine</name>
        <dbReference type="ChEBI" id="CHEBI:57705"/>
    </ligand>
</feature>
<feature type="binding site" evidence="1">
    <location>
        <position position="245"/>
    </location>
    <ligand>
        <name>UDP-N-acetyl-alpha-D-glucosamine</name>
        <dbReference type="ChEBI" id="CHEBI:57705"/>
    </ligand>
</feature>
<feature type="binding site" evidence="1">
    <location>
        <begin position="264"/>
        <end position="269"/>
    </location>
    <ligand>
        <name>UDP-N-acetyl-alpha-D-glucosamine</name>
        <dbReference type="ChEBI" id="CHEBI:57705"/>
    </ligand>
</feature>
<feature type="binding site" evidence="1">
    <location>
        <position position="289"/>
    </location>
    <ligand>
        <name>UDP-N-acetyl-alpha-D-glucosamine</name>
        <dbReference type="ChEBI" id="CHEBI:57705"/>
    </ligand>
</feature>
<proteinExistence type="inferred from homology"/>
<gene>
    <name evidence="1" type="primary">murG</name>
    <name type="ordered locus">YE0672</name>
</gene>